<dbReference type="EC" id="1.2.1.71" evidence="1"/>
<dbReference type="EMBL" id="CP001252">
    <property type="protein sequence ID" value="ACK48173.1"/>
    <property type="molecule type" value="Genomic_DNA"/>
</dbReference>
<dbReference type="RefSeq" id="WP_012588612.1">
    <property type="nucleotide sequence ID" value="NC_011663.1"/>
</dbReference>
<dbReference type="SMR" id="B8EBC2"/>
<dbReference type="KEGG" id="sbp:Sbal223_3695"/>
<dbReference type="HOGENOM" id="CLU_005391_1_0_6"/>
<dbReference type="UniPathway" id="UPA00185">
    <property type="reaction ID" value="UER00282"/>
</dbReference>
<dbReference type="Proteomes" id="UP000002507">
    <property type="component" value="Chromosome"/>
</dbReference>
<dbReference type="GO" id="GO:0043824">
    <property type="term" value="F:succinylglutamate-semialdehyde dehydrogenase activity"/>
    <property type="evidence" value="ECO:0007669"/>
    <property type="project" value="UniProtKB-EC"/>
</dbReference>
<dbReference type="GO" id="GO:0019544">
    <property type="term" value="P:arginine catabolic process to glutamate"/>
    <property type="evidence" value="ECO:0007669"/>
    <property type="project" value="UniProtKB-UniRule"/>
</dbReference>
<dbReference type="GO" id="GO:0019545">
    <property type="term" value="P:arginine catabolic process to succinate"/>
    <property type="evidence" value="ECO:0007669"/>
    <property type="project" value="UniProtKB-UniRule"/>
</dbReference>
<dbReference type="CDD" id="cd07095">
    <property type="entry name" value="ALDH_SGSD_AstD"/>
    <property type="match status" value="1"/>
</dbReference>
<dbReference type="FunFam" id="3.40.309.10:FF:000013">
    <property type="entry name" value="N-succinylglutamate 5-semialdehyde dehydrogenase"/>
    <property type="match status" value="1"/>
</dbReference>
<dbReference type="FunFam" id="3.40.605.10:FF:000010">
    <property type="entry name" value="N-succinylglutamate 5-semialdehyde dehydrogenase"/>
    <property type="match status" value="1"/>
</dbReference>
<dbReference type="Gene3D" id="3.40.605.10">
    <property type="entry name" value="Aldehyde Dehydrogenase, Chain A, domain 1"/>
    <property type="match status" value="1"/>
</dbReference>
<dbReference type="Gene3D" id="3.40.309.10">
    <property type="entry name" value="Aldehyde Dehydrogenase, Chain A, domain 2"/>
    <property type="match status" value="1"/>
</dbReference>
<dbReference type="HAMAP" id="MF_01174">
    <property type="entry name" value="Aldedh_AstD"/>
    <property type="match status" value="1"/>
</dbReference>
<dbReference type="InterPro" id="IPR016161">
    <property type="entry name" value="Ald_DH/histidinol_DH"/>
</dbReference>
<dbReference type="InterPro" id="IPR016163">
    <property type="entry name" value="Ald_DH_C"/>
</dbReference>
<dbReference type="InterPro" id="IPR016160">
    <property type="entry name" value="Ald_DH_CS_CYS"/>
</dbReference>
<dbReference type="InterPro" id="IPR029510">
    <property type="entry name" value="Ald_DH_CS_GLU"/>
</dbReference>
<dbReference type="InterPro" id="IPR016162">
    <property type="entry name" value="Ald_DH_N"/>
</dbReference>
<dbReference type="InterPro" id="IPR015590">
    <property type="entry name" value="Aldehyde_DH_dom"/>
</dbReference>
<dbReference type="InterPro" id="IPR017649">
    <property type="entry name" value="SuccinylGlu_semiald_DH_AstD"/>
</dbReference>
<dbReference type="NCBIfam" id="TIGR03240">
    <property type="entry name" value="arg_catab_astD"/>
    <property type="match status" value="1"/>
</dbReference>
<dbReference type="NCBIfam" id="NF006992">
    <property type="entry name" value="PRK09457.1"/>
    <property type="match status" value="1"/>
</dbReference>
<dbReference type="PANTHER" id="PTHR11699">
    <property type="entry name" value="ALDEHYDE DEHYDROGENASE-RELATED"/>
    <property type="match status" value="1"/>
</dbReference>
<dbReference type="Pfam" id="PF00171">
    <property type="entry name" value="Aldedh"/>
    <property type="match status" value="1"/>
</dbReference>
<dbReference type="SUPFAM" id="SSF53720">
    <property type="entry name" value="ALDH-like"/>
    <property type="match status" value="1"/>
</dbReference>
<dbReference type="PROSITE" id="PS00070">
    <property type="entry name" value="ALDEHYDE_DEHYDR_CYS"/>
    <property type="match status" value="1"/>
</dbReference>
<dbReference type="PROSITE" id="PS00687">
    <property type="entry name" value="ALDEHYDE_DEHYDR_GLU"/>
    <property type="match status" value="1"/>
</dbReference>
<protein>
    <recommendedName>
        <fullName evidence="1">N-succinylglutamate 5-semialdehyde dehydrogenase</fullName>
        <ecNumber evidence="1">1.2.1.71</ecNumber>
    </recommendedName>
    <alternativeName>
        <fullName evidence="1">Succinylglutamic semialdehyde dehydrogenase</fullName>
        <shortName evidence="1">SGSD</shortName>
    </alternativeName>
</protein>
<gene>
    <name evidence="1" type="primary">astD</name>
    <name type="ordered locus">Sbal223_3695</name>
</gene>
<keyword id="KW-0056">Arginine metabolism</keyword>
<keyword id="KW-0520">NAD</keyword>
<keyword id="KW-0560">Oxidoreductase</keyword>
<organism>
    <name type="scientific">Shewanella baltica (strain OS223)</name>
    <dbReference type="NCBI Taxonomy" id="407976"/>
    <lineage>
        <taxon>Bacteria</taxon>
        <taxon>Pseudomonadati</taxon>
        <taxon>Pseudomonadota</taxon>
        <taxon>Gammaproteobacteria</taxon>
        <taxon>Alteromonadales</taxon>
        <taxon>Shewanellaceae</taxon>
        <taxon>Shewanella</taxon>
    </lineage>
</organism>
<proteinExistence type="inferred from homology"/>
<reference key="1">
    <citation type="submission" date="2008-12" db="EMBL/GenBank/DDBJ databases">
        <title>Complete sequence of chromosome of Shewanella baltica OS223.</title>
        <authorList>
            <consortium name="US DOE Joint Genome Institute"/>
            <person name="Lucas S."/>
            <person name="Copeland A."/>
            <person name="Lapidus A."/>
            <person name="Glavina del Rio T."/>
            <person name="Dalin E."/>
            <person name="Tice H."/>
            <person name="Bruce D."/>
            <person name="Goodwin L."/>
            <person name="Pitluck S."/>
            <person name="Chertkov O."/>
            <person name="Meincke L."/>
            <person name="Brettin T."/>
            <person name="Detter J.C."/>
            <person name="Han C."/>
            <person name="Kuske C.R."/>
            <person name="Larimer F."/>
            <person name="Land M."/>
            <person name="Hauser L."/>
            <person name="Kyrpides N."/>
            <person name="Ovchinnikova G."/>
            <person name="Brettar I."/>
            <person name="Rodrigues J."/>
            <person name="Konstantinidis K."/>
            <person name="Tiedje J."/>
        </authorList>
    </citation>
    <scope>NUCLEOTIDE SEQUENCE [LARGE SCALE GENOMIC DNA]</scope>
    <source>
        <strain>OS223</strain>
    </source>
</reference>
<sequence>MTHYIQGQWHAGKGHDVASMNPANTHTIWTGKTATAEQVNAAVDAARAAQFDWFMLGFDARLAIVETYRSQLEANKAELAETIAQETGKPQWETATEVGAMIGKIALSAAAYNKRTGTEANDTPAGRAVIRHKPHGVVAVFGPYNFPGHLPNGHIVPALLAGNTVIFKPSELTPKVAELMVSLWDKAGLPAGVLNLVQGEVDTGKALASHPQLDGLFFTGSSRTGHFLHQQYAGHPGKILALEMGGNNPLIIKGVQDIKAAVHDILQSAYISSGQRCTCARRLYVEQGEQGDALIAMLADAVKQIKVGPWNSQPQPFMGSMISETAAKGMVAAQANLLNLGGVSLVELTHLEAGTGLVSPGLIDVTAIDALPDEEYFGPLLQLVRYSDFDQAIKLANQTRYGLSAGLLADSREDYDYFLARIRAGIVNWNKQITGASGAAPFGGVGASGNHRASAFYAADYCAYPVASVEADTVSLPATLSPGLSL</sequence>
<evidence type="ECO:0000255" key="1">
    <source>
        <dbReference type="HAMAP-Rule" id="MF_01174"/>
    </source>
</evidence>
<name>ASTD_SHEB2</name>
<accession>B8EBC2</accession>
<comment type="function">
    <text evidence="1">Catalyzes the NAD-dependent reduction of succinylglutamate semialdehyde into succinylglutamate.</text>
</comment>
<comment type="catalytic activity">
    <reaction evidence="1">
        <text>N-succinyl-L-glutamate 5-semialdehyde + NAD(+) + H2O = N-succinyl-L-glutamate + NADH + 2 H(+)</text>
        <dbReference type="Rhea" id="RHEA:10812"/>
        <dbReference type="ChEBI" id="CHEBI:15377"/>
        <dbReference type="ChEBI" id="CHEBI:15378"/>
        <dbReference type="ChEBI" id="CHEBI:57540"/>
        <dbReference type="ChEBI" id="CHEBI:57945"/>
        <dbReference type="ChEBI" id="CHEBI:58520"/>
        <dbReference type="ChEBI" id="CHEBI:58763"/>
        <dbReference type="EC" id="1.2.1.71"/>
    </reaction>
</comment>
<comment type="pathway">
    <text evidence="1">Amino-acid degradation; L-arginine degradation via AST pathway; L-glutamate and succinate from L-arginine: step 4/5.</text>
</comment>
<comment type="similarity">
    <text evidence="1">Belongs to the aldehyde dehydrogenase family. AstD subfamily.</text>
</comment>
<feature type="chain" id="PRO_1000164406" description="N-succinylglutamate 5-semialdehyde dehydrogenase">
    <location>
        <begin position="1"/>
        <end position="486"/>
    </location>
</feature>
<feature type="active site" evidence="1">
    <location>
        <position position="243"/>
    </location>
</feature>
<feature type="active site" evidence="1">
    <location>
        <position position="277"/>
    </location>
</feature>
<feature type="binding site" evidence="1">
    <location>
        <begin position="220"/>
        <end position="225"/>
    </location>
    <ligand>
        <name>NAD(+)</name>
        <dbReference type="ChEBI" id="CHEBI:57540"/>
    </ligand>
</feature>